<name>CATK_MOUSE</name>
<sequence>MWVFKFLLLPMVSFALSPEEMLDTQWELWKKTHQKQYNSKVDEISRRLIWEKNLKQISAHNLEASLGVHTYELAMNHLGDMTSEEVVQKMTGLRIPPSRSYSNDTLYTPEWEGRVPDSIDYRKKGYVTPVKNQGQCGSCWAFSSAGALEGQLKKKTGKLLALSPQNLVDCVTENYGCGGGYMTTAFQYVQQNGGIDSEDAYPYVGQDESCMYNATAKAAKCRGYREIPVGNEKALKRAVARVGPISVSIDASLASFQFYSRGVYYDENCDRDNVNHAVLVVGYGTQKGSKHWIIKNSWGESWGNKGYALLARNKNNACGITNMASFPKM</sequence>
<accession>P55097</accession>
<accession>O88718</accession>
<protein>
    <recommendedName>
        <fullName>Cathepsin K</fullName>
        <ecNumber>3.4.22.38</ecNumber>
    </recommendedName>
</protein>
<feature type="signal peptide" evidence="2">
    <location>
        <begin position="1"/>
        <end position="15"/>
    </location>
</feature>
<feature type="propeptide" id="PRO_0000026301" description="Activation peptide">
    <location>
        <begin position="16"/>
        <end position="114"/>
    </location>
</feature>
<feature type="chain" id="PRO_0000026302" description="Cathepsin K">
    <location>
        <begin position="115"/>
        <end position="329"/>
    </location>
</feature>
<feature type="active site" evidence="1">
    <location>
        <position position="139"/>
    </location>
</feature>
<feature type="active site" evidence="1">
    <location>
        <position position="276"/>
    </location>
</feature>
<feature type="active site" evidence="1">
    <location>
        <position position="296"/>
    </location>
</feature>
<feature type="glycosylation site" description="N-linked (GlcNAc...) asparagine" evidence="2">
    <location>
        <position position="103"/>
    </location>
</feature>
<feature type="glycosylation site" description="N-linked (GlcNAc...) asparagine" evidence="2">
    <location>
        <position position="213"/>
    </location>
</feature>
<feature type="disulfide bond" evidence="1">
    <location>
        <begin position="136"/>
        <end position="177"/>
    </location>
</feature>
<feature type="disulfide bond" evidence="1">
    <location>
        <begin position="170"/>
        <end position="210"/>
    </location>
</feature>
<feature type="disulfide bond" evidence="1">
    <location>
        <begin position="269"/>
        <end position="318"/>
    </location>
</feature>
<feature type="sequence conflict" description="In Ref. 1; CAA64218." evidence="7" ref="1">
    <original>VFKF</original>
    <variation>GLKV</variation>
    <location>
        <begin position="3"/>
        <end position="6"/>
    </location>
</feature>
<feature type="sequence conflict" description="In Ref. 1; CAA64218." evidence="7" ref="1">
    <original>Y</original>
    <variation>F</variation>
    <location>
        <position position="201"/>
    </location>
</feature>
<feature type="turn" evidence="8">
    <location>
        <begin position="121"/>
        <end position="125"/>
    </location>
</feature>
<feature type="helix" evidence="8">
    <location>
        <begin position="139"/>
        <end position="156"/>
    </location>
</feature>
<feature type="helix" evidence="8">
    <location>
        <begin position="164"/>
        <end position="170"/>
    </location>
</feature>
<feature type="helix" evidence="8">
    <location>
        <begin position="176"/>
        <end position="178"/>
    </location>
</feature>
<feature type="helix" evidence="8">
    <location>
        <begin position="182"/>
        <end position="192"/>
    </location>
</feature>
<feature type="strand" evidence="8">
    <location>
        <begin position="195"/>
        <end position="197"/>
    </location>
</feature>
<feature type="turn" evidence="8">
    <location>
        <begin position="198"/>
        <end position="200"/>
    </location>
</feature>
<feature type="helix" evidence="8">
    <location>
        <begin position="214"/>
        <end position="216"/>
    </location>
</feature>
<feature type="strand" evidence="8">
    <location>
        <begin position="217"/>
        <end position="219"/>
    </location>
</feature>
<feature type="strand" evidence="8">
    <location>
        <begin position="224"/>
        <end position="226"/>
    </location>
</feature>
<feature type="helix" evidence="8">
    <location>
        <begin position="232"/>
        <end position="241"/>
    </location>
</feature>
<feature type="strand" evidence="8">
    <location>
        <begin position="244"/>
        <end position="249"/>
    </location>
</feature>
<feature type="helix" evidence="8">
    <location>
        <begin position="254"/>
        <end position="257"/>
    </location>
</feature>
<feature type="strand" evidence="8">
    <location>
        <begin position="261"/>
        <end position="264"/>
    </location>
</feature>
<feature type="strand" evidence="8">
    <location>
        <begin position="271"/>
        <end position="273"/>
    </location>
</feature>
<feature type="strand" evidence="8">
    <location>
        <begin position="276"/>
        <end position="286"/>
    </location>
</feature>
<feature type="strand" evidence="8">
    <location>
        <begin position="289"/>
        <end position="295"/>
    </location>
</feature>
<feature type="strand" evidence="8">
    <location>
        <begin position="307"/>
        <end position="311"/>
    </location>
</feature>
<feature type="strand" evidence="8">
    <location>
        <begin position="313"/>
        <end position="316"/>
    </location>
</feature>
<feature type="helix" evidence="8">
    <location>
        <begin position="317"/>
        <end position="319"/>
    </location>
</feature>
<feature type="turn" evidence="8">
    <location>
        <begin position="320"/>
        <end position="323"/>
    </location>
</feature>
<feature type="strand" evidence="8">
    <location>
        <begin position="325"/>
        <end position="327"/>
    </location>
</feature>
<evidence type="ECO:0000250" key="1"/>
<evidence type="ECO:0000255" key="2"/>
<evidence type="ECO:0000255" key="3">
    <source>
        <dbReference type="PROSITE-ProRule" id="PRU10088"/>
    </source>
</evidence>
<evidence type="ECO:0000255" key="4">
    <source>
        <dbReference type="PROSITE-ProRule" id="PRU10089"/>
    </source>
</evidence>
<evidence type="ECO:0000269" key="5">
    <source>
    </source>
</evidence>
<evidence type="ECO:0000269" key="6">
    <source>
    </source>
</evidence>
<evidence type="ECO:0000305" key="7"/>
<evidence type="ECO:0007829" key="8">
    <source>
        <dbReference type="PDB" id="5T6U"/>
    </source>
</evidence>
<gene>
    <name type="primary">Ctsk</name>
</gene>
<keyword id="KW-0002">3D-structure</keyword>
<keyword id="KW-1003">Cell membrane</keyword>
<keyword id="KW-1015">Disulfide bond</keyword>
<keyword id="KW-0325">Glycoprotein</keyword>
<keyword id="KW-0378">Hydrolase</keyword>
<keyword id="KW-0458">Lysosome</keyword>
<keyword id="KW-0472">Membrane</keyword>
<keyword id="KW-0645">Protease</keyword>
<keyword id="KW-1185">Reference proteome</keyword>
<keyword id="KW-0964">Secreted</keyword>
<keyword id="KW-0732">Signal</keyword>
<keyword id="KW-0788">Thiol protease</keyword>
<keyword id="KW-0865">Zymogen</keyword>
<dbReference type="EC" id="3.4.22.38"/>
<dbReference type="EMBL" id="X94444">
    <property type="protein sequence ID" value="CAA64218.1"/>
    <property type="molecule type" value="mRNA"/>
</dbReference>
<dbReference type="EMBL" id="AJ006033">
    <property type="protein sequence ID" value="CAA06825.1"/>
    <property type="molecule type" value="Genomic_DNA"/>
</dbReference>
<dbReference type="EMBL" id="BC046320">
    <property type="protein sequence ID" value="AAH46320.1"/>
    <property type="molecule type" value="mRNA"/>
</dbReference>
<dbReference type="CCDS" id="CCDS17615.1"/>
<dbReference type="PIR" id="S74227">
    <property type="entry name" value="S74227"/>
</dbReference>
<dbReference type="RefSeq" id="NP_031828.2">
    <property type="nucleotide sequence ID" value="NM_007802.4"/>
</dbReference>
<dbReference type="RefSeq" id="XP_006501037.1">
    <property type="nucleotide sequence ID" value="XM_006500974.3"/>
</dbReference>
<dbReference type="PDB" id="5T6U">
    <property type="method" value="X-ray"/>
    <property type="resolution" value="2.90 A"/>
    <property type="chains" value="A=115-329"/>
</dbReference>
<dbReference type="PDB" id="6BKI">
    <property type="method" value="X-ray"/>
    <property type="resolution" value="2.94 A"/>
    <property type="chains" value="A/B=115-329"/>
</dbReference>
<dbReference type="PDB" id="8V57">
    <property type="method" value="X-ray"/>
    <property type="resolution" value="2.75 A"/>
    <property type="chains" value="A/B=113-329"/>
</dbReference>
<dbReference type="PDB" id="8V58">
    <property type="method" value="X-ray"/>
    <property type="resolution" value="3.10 A"/>
    <property type="chains" value="A/B=113-329"/>
</dbReference>
<dbReference type="PDBsum" id="5T6U"/>
<dbReference type="PDBsum" id="6BKI"/>
<dbReference type="PDBsum" id="8V57"/>
<dbReference type="PDBsum" id="8V58"/>
<dbReference type="SMR" id="P55097"/>
<dbReference type="FunCoup" id="P55097">
    <property type="interactions" value="268"/>
</dbReference>
<dbReference type="IntAct" id="P55097">
    <property type="interactions" value="1"/>
</dbReference>
<dbReference type="MINT" id="P55097"/>
<dbReference type="STRING" id="10090.ENSMUSP00000015664"/>
<dbReference type="ChEMBL" id="CHEMBL1075277"/>
<dbReference type="MEROPS" id="C01.036"/>
<dbReference type="MEROPS" id="I29.007"/>
<dbReference type="GlyCosmos" id="P55097">
    <property type="glycosylation" value="2 sites, No reported glycans"/>
</dbReference>
<dbReference type="GlyGen" id="P55097">
    <property type="glycosylation" value="2 sites"/>
</dbReference>
<dbReference type="iPTMnet" id="P55097"/>
<dbReference type="PhosphoSitePlus" id="P55097"/>
<dbReference type="PaxDb" id="10090-ENSMUSP00000015664"/>
<dbReference type="PeptideAtlas" id="P55097"/>
<dbReference type="ProteomicsDB" id="279921"/>
<dbReference type="Antibodypedia" id="34039">
    <property type="antibodies" value="597 antibodies from 36 providers"/>
</dbReference>
<dbReference type="DNASU" id="13038"/>
<dbReference type="Ensembl" id="ENSMUST00000015664.5">
    <property type="protein sequence ID" value="ENSMUSP00000015664.4"/>
    <property type="gene ID" value="ENSMUSG00000028111.5"/>
</dbReference>
<dbReference type="GeneID" id="13038"/>
<dbReference type="KEGG" id="mmu:13038"/>
<dbReference type="UCSC" id="uc008qjy.2">
    <property type="organism name" value="mouse"/>
</dbReference>
<dbReference type="AGR" id="MGI:107823"/>
<dbReference type="CTD" id="1513"/>
<dbReference type="MGI" id="MGI:107823">
    <property type="gene designation" value="Ctsk"/>
</dbReference>
<dbReference type="VEuPathDB" id="HostDB:ENSMUSG00000028111"/>
<dbReference type="eggNOG" id="KOG1543">
    <property type="taxonomic scope" value="Eukaryota"/>
</dbReference>
<dbReference type="GeneTree" id="ENSGT00940000157759"/>
<dbReference type="HOGENOM" id="CLU_012184_1_2_1"/>
<dbReference type="InParanoid" id="P55097"/>
<dbReference type="OMA" id="EGETCCC"/>
<dbReference type="OrthoDB" id="65740at2759"/>
<dbReference type="PhylomeDB" id="P55097"/>
<dbReference type="TreeFam" id="TF313739"/>
<dbReference type="BioCyc" id="MetaCyc:MONOMER-14811"/>
<dbReference type="BRENDA" id="3.4.22.38">
    <property type="organism ID" value="3474"/>
</dbReference>
<dbReference type="Reactome" id="R-MMU-1442490">
    <property type="pathway name" value="Collagen degradation"/>
</dbReference>
<dbReference type="Reactome" id="R-MMU-1474228">
    <property type="pathway name" value="Degradation of the extracellular matrix"/>
</dbReference>
<dbReference type="Reactome" id="R-MMU-1592389">
    <property type="pathway name" value="Activation of Matrix Metalloproteinases"/>
</dbReference>
<dbReference type="Reactome" id="R-MMU-1679131">
    <property type="pathway name" value="Trafficking and processing of endosomal TLR"/>
</dbReference>
<dbReference type="Reactome" id="R-MMU-2132295">
    <property type="pathway name" value="MHC class II antigen presentation"/>
</dbReference>
<dbReference type="Reactome" id="R-MMU-8939242">
    <property type="pathway name" value="RUNX1 regulates transcription of genes involved in differentiation of keratinocytes"/>
</dbReference>
<dbReference type="BioGRID-ORCS" id="13038">
    <property type="hits" value="1 hit in 79 CRISPR screens"/>
</dbReference>
<dbReference type="ChiTaRS" id="Ctsk">
    <property type="organism name" value="mouse"/>
</dbReference>
<dbReference type="PRO" id="PR:P55097"/>
<dbReference type="Proteomes" id="UP000000589">
    <property type="component" value="Chromosome 3"/>
</dbReference>
<dbReference type="RNAct" id="P55097">
    <property type="molecule type" value="protein"/>
</dbReference>
<dbReference type="Bgee" id="ENSMUSG00000028111">
    <property type="expression patterns" value="Expressed in hindlimb long bone and 192 other cell types or tissues"/>
</dbReference>
<dbReference type="ExpressionAtlas" id="P55097">
    <property type="expression patterns" value="baseline and differential"/>
</dbReference>
<dbReference type="GO" id="GO:0016324">
    <property type="term" value="C:apical plasma membrane"/>
    <property type="evidence" value="ECO:0007669"/>
    <property type="project" value="UniProtKB-SubCell"/>
</dbReference>
<dbReference type="GO" id="GO:0009897">
    <property type="term" value="C:external side of plasma membrane"/>
    <property type="evidence" value="ECO:0000314"/>
    <property type="project" value="UniProtKB"/>
</dbReference>
<dbReference type="GO" id="GO:0005615">
    <property type="term" value="C:extracellular space"/>
    <property type="evidence" value="ECO:0000314"/>
    <property type="project" value="UniProtKB"/>
</dbReference>
<dbReference type="GO" id="GO:0005764">
    <property type="term" value="C:lysosome"/>
    <property type="evidence" value="ECO:0000314"/>
    <property type="project" value="UniProtKB"/>
</dbReference>
<dbReference type="GO" id="GO:0005654">
    <property type="term" value="C:nucleoplasm"/>
    <property type="evidence" value="ECO:0007669"/>
    <property type="project" value="Ensembl"/>
</dbReference>
<dbReference type="GO" id="GO:0005518">
    <property type="term" value="F:collagen binding"/>
    <property type="evidence" value="ECO:0007669"/>
    <property type="project" value="Ensembl"/>
</dbReference>
<dbReference type="GO" id="GO:0004197">
    <property type="term" value="F:cysteine-type endopeptidase activity"/>
    <property type="evidence" value="ECO:0007669"/>
    <property type="project" value="UniProtKB-EC"/>
</dbReference>
<dbReference type="GO" id="GO:0008234">
    <property type="term" value="F:cysteine-type peptidase activity"/>
    <property type="evidence" value="ECO:0000266"/>
    <property type="project" value="MGI"/>
</dbReference>
<dbReference type="GO" id="GO:0001968">
    <property type="term" value="F:fibronectin binding"/>
    <property type="evidence" value="ECO:0007669"/>
    <property type="project" value="Ensembl"/>
</dbReference>
<dbReference type="GO" id="GO:0043394">
    <property type="term" value="F:proteoglycan binding"/>
    <property type="evidence" value="ECO:0007669"/>
    <property type="project" value="Ensembl"/>
</dbReference>
<dbReference type="GO" id="GO:0045453">
    <property type="term" value="P:bone resorption"/>
    <property type="evidence" value="ECO:0000315"/>
    <property type="project" value="MGI"/>
</dbReference>
<dbReference type="GO" id="GO:0030574">
    <property type="term" value="P:collagen catabolic process"/>
    <property type="evidence" value="ECO:0000315"/>
    <property type="project" value="MGI"/>
</dbReference>
<dbReference type="GO" id="GO:0061037">
    <property type="term" value="P:negative regulation of cartilage development"/>
    <property type="evidence" value="ECO:0000315"/>
    <property type="project" value="MGI"/>
</dbReference>
<dbReference type="GO" id="GO:0051603">
    <property type="term" value="P:proteolysis involved in protein catabolic process"/>
    <property type="evidence" value="ECO:0000315"/>
    <property type="project" value="UniProtKB"/>
</dbReference>
<dbReference type="GO" id="GO:0006590">
    <property type="term" value="P:thyroid hormone generation"/>
    <property type="evidence" value="ECO:0000315"/>
    <property type="project" value="UniProtKB"/>
</dbReference>
<dbReference type="CDD" id="cd02248">
    <property type="entry name" value="Peptidase_C1A"/>
    <property type="match status" value="1"/>
</dbReference>
<dbReference type="FunFam" id="3.90.70.10:FF:000006">
    <property type="entry name" value="Cathepsin S"/>
    <property type="match status" value="1"/>
</dbReference>
<dbReference type="Gene3D" id="3.90.70.10">
    <property type="entry name" value="Cysteine proteinases"/>
    <property type="match status" value="1"/>
</dbReference>
<dbReference type="InterPro" id="IPR038765">
    <property type="entry name" value="Papain-like_cys_pep_sf"/>
</dbReference>
<dbReference type="InterPro" id="IPR000169">
    <property type="entry name" value="Pept_cys_AS"/>
</dbReference>
<dbReference type="InterPro" id="IPR025660">
    <property type="entry name" value="Pept_his_AS"/>
</dbReference>
<dbReference type="InterPro" id="IPR013128">
    <property type="entry name" value="Peptidase_C1A"/>
</dbReference>
<dbReference type="InterPro" id="IPR000668">
    <property type="entry name" value="Peptidase_C1A_C"/>
</dbReference>
<dbReference type="InterPro" id="IPR039417">
    <property type="entry name" value="Peptidase_C1A_papain-like"/>
</dbReference>
<dbReference type="InterPro" id="IPR013201">
    <property type="entry name" value="Prot_inhib_I29"/>
</dbReference>
<dbReference type="PANTHER" id="PTHR12411">
    <property type="entry name" value="CYSTEINE PROTEASE FAMILY C1-RELATED"/>
    <property type="match status" value="1"/>
</dbReference>
<dbReference type="Pfam" id="PF08246">
    <property type="entry name" value="Inhibitor_I29"/>
    <property type="match status" value="1"/>
</dbReference>
<dbReference type="Pfam" id="PF00112">
    <property type="entry name" value="Peptidase_C1"/>
    <property type="match status" value="1"/>
</dbReference>
<dbReference type="PRINTS" id="PR00705">
    <property type="entry name" value="PAPAIN"/>
</dbReference>
<dbReference type="SMART" id="SM00848">
    <property type="entry name" value="Inhibitor_I29"/>
    <property type="match status" value="1"/>
</dbReference>
<dbReference type="SMART" id="SM00645">
    <property type="entry name" value="Pept_C1"/>
    <property type="match status" value="1"/>
</dbReference>
<dbReference type="SUPFAM" id="SSF54001">
    <property type="entry name" value="Cysteine proteinases"/>
    <property type="match status" value="1"/>
</dbReference>
<dbReference type="PROSITE" id="PS00139">
    <property type="entry name" value="THIOL_PROTEASE_CYS"/>
    <property type="match status" value="1"/>
</dbReference>
<dbReference type="PROSITE" id="PS00639">
    <property type="entry name" value="THIOL_PROTEASE_HIS"/>
    <property type="match status" value="1"/>
</dbReference>
<reference key="1">
    <citation type="journal article" date="1996" name="FEBS Lett.">
        <title>Mouse cathepsin K: cDNA cloning and predominant expression of the gene in osteoclasts, and in some hypertrophying chondrocytes during mouse development.</title>
        <authorList>
            <person name="Rantakokko J.A."/>
            <person name="Aro H.T."/>
            <person name="Savontaus M."/>
            <person name="Vuorio E."/>
        </authorList>
    </citation>
    <scope>NUCLEOTIDE SEQUENCE [MRNA]</scope>
    <scope>TISSUE SPECIFICITY</scope>
    <scope>DEVELOPMENTAL STAGE</scope>
    <source>
        <strain>C57BL/6J</strain>
        <tissue>Calvaria</tissue>
    </source>
</reference>
<reference key="2">
    <citation type="journal article" date="1999" name="Matrix Biol.">
        <title>Complete genomic structure of the mouse cathepsin K gene (Ctsk) and its localization next to the Arnt gene on mouse chromosome 3.</title>
        <authorList>
            <person name="Rantakokko J.A."/>
            <person name="Kiviranta R."/>
            <person name="Eerola R."/>
            <person name="Aro H.T."/>
            <person name="Vuorio E."/>
        </authorList>
    </citation>
    <scope>NUCLEOTIDE SEQUENCE</scope>
    <source>
        <strain>129/SvJ</strain>
    </source>
</reference>
<reference key="3">
    <citation type="journal article" date="2004" name="Genome Res.">
        <title>The status, quality, and expansion of the NIH full-length cDNA project: the Mammalian Gene Collection (MGC).</title>
        <authorList>
            <consortium name="The MGC Project Team"/>
        </authorList>
    </citation>
    <scope>NUCLEOTIDE SEQUENCE [LARGE SCALE MRNA]</scope>
    <source>
        <tissue>Olfactory epithelium</tissue>
    </source>
</reference>
<reference key="4">
    <citation type="journal article" date="2003" name="J. Clin. Invest.">
        <title>Thyroid functions of mouse cathepsins B, K, and L.</title>
        <authorList>
            <person name="Friedrichs B."/>
            <person name="Tepel C."/>
            <person name="Reinheckel T."/>
            <person name="Deussing J."/>
            <person name="von Figura K."/>
            <person name="Herzog V."/>
            <person name="Peters C."/>
            <person name="Saftig P."/>
            <person name="Brix K."/>
        </authorList>
    </citation>
    <scope>FUNCTION</scope>
    <scope>SUBCELLULAR LOCATION</scope>
    <scope>TISSUE SPECIFICITY</scope>
    <scope>DISRUPTION PHENOTYPE</scope>
</reference>
<organism>
    <name type="scientific">Mus musculus</name>
    <name type="common">Mouse</name>
    <dbReference type="NCBI Taxonomy" id="10090"/>
    <lineage>
        <taxon>Eukaryota</taxon>
        <taxon>Metazoa</taxon>
        <taxon>Chordata</taxon>
        <taxon>Craniata</taxon>
        <taxon>Vertebrata</taxon>
        <taxon>Euteleostomi</taxon>
        <taxon>Mammalia</taxon>
        <taxon>Eutheria</taxon>
        <taxon>Euarchontoglires</taxon>
        <taxon>Glires</taxon>
        <taxon>Rodentia</taxon>
        <taxon>Myomorpha</taxon>
        <taxon>Muroidea</taxon>
        <taxon>Muridae</taxon>
        <taxon>Murinae</taxon>
        <taxon>Mus</taxon>
        <taxon>Mus</taxon>
    </lineage>
</organism>
<proteinExistence type="evidence at protein level"/>
<comment type="function">
    <text evidence="1 5">Thiol protease involved in osteoclastic bone resorption. Displays potent endoprotease activity against fibrinogen at acid pH. May play an important role in extracellular matrix degradation (By similarity). Involved in the release of thyroid hormone thyroxine (T4) by limited proteolysis of TG/thyroglobulin in the thyroid follicle lumen (PubMed:12782676).</text>
</comment>
<comment type="catalytic activity">
    <reaction>
        <text>Broad proteolytic activity. With small-molecule substrates and inhibitors, the major determinant of specificity is P2, which is preferably Leu, Met &gt; Phe, and not Arg.</text>
        <dbReference type="EC" id="3.4.22.38"/>
    </reaction>
</comment>
<comment type="subcellular location">
    <subcellularLocation>
        <location evidence="5">Lysosome</location>
    </subcellularLocation>
    <subcellularLocation>
        <location evidence="5">Secreted</location>
    </subcellularLocation>
    <subcellularLocation>
        <location evidence="5">Apical cell membrane</location>
        <topology evidence="5">Peripheral membrane protein</topology>
        <orientation evidence="5">Extracellular side</orientation>
    </subcellularLocation>
    <text evidence="5">Localizes to the lumen of thyroid follicles and to the apical membrane of thyroid epithelial cells.</text>
</comment>
<comment type="tissue specificity">
    <text evidence="5 6">Predominantly expressed in bones (PubMed:8814310). Expressed in thyroid epithelial cells (PubMed:12782676).</text>
</comment>
<comment type="developmental stage">
    <text evidence="6">Expressed in new born and adults.</text>
</comment>
<comment type="disruption phenotype">
    <text evidence="5">Enlarged thyroid follicles, reduced extension of the thyroid epithelium, and slight increase in the levels of Tg/thyroglobulin in the thyroid follicles. Loss of localization of CTSB/cathepsin B and L to the apical membrane of thyroid epithelial cells. Serum levels of thyroid hormone thyroxine (T4) are normal. However, reduction in T4 levels is more severe in CTSK and CTSL double knockout mice compared to CTSL double knockout mice.</text>
</comment>
<comment type="similarity">
    <text evidence="3 4">Belongs to the peptidase C1 family.</text>
</comment>